<reference key="1">
    <citation type="journal article" date="2000" name="Nature">
        <title>Genome sequence of the endocellular bacterial symbiont of aphids Buchnera sp. APS.</title>
        <authorList>
            <person name="Shigenobu S."/>
            <person name="Watanabe H."/>
            <person name="Hattori M."/>
            <person name="Sakaki Y."/>
            <person name="Ishikawa H."/>
        </authorList>
    </citation>
    <scope>NUCLEOTIDE SEQUENCE [LARGE SCALE GENOMIC DNA]</scope>
    <source>
        <strain>APS</strain>
    </source>
</reference>
<gene>
    <name evidence="1" type="primary">cysI</name>
    <name type="ordered locus">BU427</name>
</gene>
<comment type="function">
    <text evidence="1">Component of the sulfite reductase complex that catalyzes the 6-electron reduction of sulfite to sulfide. This is one of several activities required for the biosynthesis of L-cysteine from sulfate.</text>
</comment>
<comment type="catalytic activity">
    <reaction evidence="1">
        <text>hydrogen sulfide + 3 NADP(+) + 3 H2O = sulfite + 3 NADPH + 4 H(+)</text>
        <dbReference type="Rhea" id="RHEA:13801"/>
        <dbReference type="ChEBI" id="CHEBI:15377"/>
        <dbReference type="ChEBI" id="CHEBI:15378"/>
        <dbReference type="ChEBI" id="CHEBI:17359"/>
        <dbReference type="ChEBI" id="CHEBI:29919"/>
        <dbReference type="ChEBI" id="CHEBI:57783"/>
        <dbReference type="ChEBI" id="CHEBI:58349"/>
        <dbReference type="EC" id="1.8.1.2"/>
    </reaction>
</comment>
<comment type="cofactor">
    <cofactor evidence="1">
        <name>siroheme</name>
        <dbReference type="ChEBI" id="CHEBI:60052"/>
    </cofactor>
    <text evidence="1">Binds 1 siroheme per subunit.</text>
</comment>
<comment type="cofactor">
    <cofactor evidence="1">
        <name>[4Fe-4S] cluster</name>
        <dbReference type="ChEBI" id="CHEBI:49883"/>
    </cofactor>
    <text evidence="1">Binds 1 [4Fe-4S] cluster per subunit.</text>
</comment>
<comment type="pathway">
    <text evidence="1">Sulfur metabolism; hydrogen sulfide biosynthesis; hydrogen sulfide from sulfite (NADPH route): step 1/1.</text>
</comment>
<comment type="subunit">
    <text evidence="1">Alpha(8)-beta(8). The alpha component is a flavoprotein, the beta component is a hemoprotein.</text>
</comment>
<comment type="similarity">
    <text evidence="1">Belongs to the nitrite and sulfite reductase 4Fe-4S domain family.</text>
</comment>
<keyword id="KW-0004">4Fe-4S</keyword>
<keyword id="KW-0028">Amino-acid biosynthesis</keyword>
<keyword id="KW-0198">Cysteine biosynthesis</keyword>
<keyword id="KW-0349">Heme</keyword>
<keyword id="KW-0408">Iron</keyword>
<keyword id="KW-0411">Iron-sulfur</keyword>
<keyword id="KW-0479">Metal-binding</keyword>
<keyword id="KW-0521">NADP</keyword>
<keyword id="KW-0560">Oxidoreductase</keyword>
<keyword id="KW-1185">Reference proteome</keyword>
<sequence>MNKKFKKIVTEKKLTDAERIKENSNYLRGTITDDLKNEITNGFTGDNFSLIRFHGMYQQDDRDLRIERNEQKLEPRYAMMLRCRLPGGVIKAKKWLKIDYFASKYTLYGTIRLTNRQTFQFHGILKKNLKDVHKMLHSIGLDSLATANDVNRNVLCTSNPMESLIHQEAYEWARKISNFLLPHTKAYAEIWLDQKKIVTTEKEPILGKTYLPRKFKTTVVIPPYNDVDLYANDMNFVAITKNEKIIGFNILIGGGLSFIHGNKNTWPFLATEIGYISVENTLSIAKAIVTTQRDWGNRTDRANAKTRYTINNFGLNEFKKEIEKRANVNLKPVREYSFISRGDRFGWIKDINNNWSLTLFIQNGRIYDDNDKLFKSGLLKIANIHDGNFRITSNQNIIISEVSEKNKNKIEKIALSSGLINKSTNLRKNSMACVSFPTCPLAMAEAERMLSFFITQLENIMLKYGVEDEVIILRVSGCPNGCGRSLLAEIGLIGKSIGRYNLYIGGNRIGNRIPKIYKENITEQEILIHLKYLIKTWSNERKNKEDFGDFIVRKEFVKEVINPVYDFWS</sequence>
<feature type="chain" id="PRO_0000199893" description="Sulfite reductase [NADPH] hemoprotein beta-component">
    <location>
        <begin position="1"/>
        <end position="569"/>
    </location>
</feature>
<feature type="binding site" evidence="1">
    <location>
        <position position="433"/>
    </location>
    <ligand>
        <name>[4Fe-4S] cluster</name>
        <dbReference type="ChEBI" id="CHEBI:49883"/>
    </ligand>
</feature>
<feature type="binding site" evidence="1">
    <location>
        <position position="439"/>
    </location>
    <ligand>
        <name>[4Fe-4S] cluster</name>
        <dbReference type="ChEBI" id="CHEBI:49883"/>
    </ligand>
</feature>
<feature type="binding site" evidence="1">
    <location>
        <position position="478"/>
    </location>
    <ligand>
        <name>[4Fe-4S] cluster</name>
        <dbReference type="ChEBI" id="CHEBI:49883"/>
    </ligand>
</feature>
<feature type="binding site" evidence="1">
    <location>
        <position position="482"/>
    </location>
    <ligand>
        <name>[4Fe-4S] cluster</name>
        <dbReference type="ChEBI" id="CHEBI:49883"/>
    </ligand>
</feature>
<feature type="binding site" description="axial binding residue" evidence="1">
    <location>
        <position position="482"/>
    </location>
    <ligand>
        <name>siroheme</name>
        <dbReference type="ChEBI" id="CHEBI:60052"/>
    </ligand>
    <ligandPart>
        <name>Fe</name>
        <dbReference type="ChEBI" id="CHEBI:18248"/>
    </ligandPart>
</feature>
<accession>P57502</accession>
<proteinExistence type="inferred from homology"/>
<organism>
    <name type="scientific">Buchnera aphidicola subsp. Acyrthosiphon pisum (strain APS)</name>
    <name type="common">Acyrthosiphon pisum symbiotic bacterium</name>
    <dbReference type="NCBI Taxonomy" id="107806"/>
    <lineage>
        <taxon>Bacteria</taxon>
        <taxon>Pseudomonadati</taxon>
        <taxon>Pseudomonadota</taxon>
        <taxon>Gammaproteobacteria</taxon>
        <taxon>Enterobacterales</taxon>
        <taxon>Erwiniaceae</taxon>
        <taxon>Buchnera</taxon>
    </lineage>
</organism>
<protein>
    <recommendedName>
        <fullName evidence="1">Sulfite reductase [NADPH] hemoprotein beta-component</fullName>
        <shortName evidence="1">SiR-HP</shortName>
        <shortName evidence="1">SiRHP</shortName>
        <ecNumber evidence="1">1.8.1.2</ecNumber>
    </recommendedName>
</protein>
<name>CYSI_BUCAI</name>
<dbReference type="EC" id="1.8.1.2" evidence="1"/>
<dbReference type="EMBL" id="BA000003">
    <property type="protein sequence ID" value="BAB13125.1"/>
    <property type="molecule type" value="Genomic_DNA"/>
</dbReference>
<dbReference type="RefSeq" id="NP_240239.1">
    <property type="nucleotide sequence ID" value="NC_002528.1"/>
</dbReference>
<dbReference type="RefSeq" id="WP_009874380.1">
    <property type="nucleotide sequence ID" value="NC_002528.1"/>
</dbReference>
<dbReference type="SMR" id="P57502"/>
<dbReference type="STRING" id="563178.BUAP5A_420"/>
<dbReference type="EnsemblBacteria" id="BAB13125">
    <property type="protein sequence ID" value="BAB13125"/>
    <property type="gene ID" value="BAB13125"/>
</dbReference>
<dbReference type="KEGG" id="buc:BU427"/>
<dbReference type="PATRIC" id="fig|107806.10.peg.436"/>
<dbReference type="eggNOG" id="COG0155">
    <property type="taxonomic scope" value="Bacteria"/>
</dbReference>
<dbReference type="HOGENOM" id="CLU_001975_3_2_6"/>
<dbReference type="UniPathway" id="UPA00140">
    <property type="reaction ID" value="UER00207"/>
</dbReference>
<dbReference type="Proteomes" id="UP000001806">
    <property type="component" value="Chromosome"/>
</dbReference>
<dbReference type="GO" id="GO:0009337">
    <property type="term" value="C:sulfite reductase complex (NADPH)"/>
    <property type="evidence" value="ECO:0007669"/>
    <property type="project" value="InterPro"/>
</dbReference>
<dbReference type="GO" id="GO:0051539">
    <property type="term" value="F:4 iron, 4 sulfur cluster binding"/>
    <property type="evidence" value="ECO:0007669"/>
    <property type="project" value="UniProtKB-KW"/>
</dbReference>
<dbReference type="GO" id="GO:0020037">
    <property type="term" value="F:heme binding"/>
    <property type="evidence" value="ECO:0007669"/>
    <property type="project" value="InterPro"/>
</dbReference>
<dbReference type="GO" id="GO:0046872">
    <property type="term" value="F:metal ion binding"/>
    <property type="evidence" value="ECO:0007669"/>
    <property type="project" value="UniProtKB-KW"/>
</dbReference>
<dbReference type="GO" id="GO:0050661">
    <property type="term" value="F:NADP binding"/>
    <property type="evidence" value="ECO:0007669"/>
    <property type="project" value="InterPro"/>
</dbReference>
<dbReference type="GO" id="GO:0050311">
    <property type="term" value="F:sulfite reductase (ferredoxin) activity"/>
    <property type="evidence" value="ECO:0007669"/>
    <property type="project" value="TreeGrafter"/>
</dbReference>
<dbReference type="GO" id="GO:0004783">
    <property type="term" value="F:sulfite reductase (NADPH) activity"/>
    <property type="evidence" value="ECO:0007669"/>
    <property type="project" value="UniProtKB-UniRule"/>
</dbReference>
<dbReference type="GO" id="GO:0019344">
    <property type="term" value="P:cysteine biosynthetic process"/>
    <property type="evidence" value="ECO:0007669"/>
    <property type="project" value="UniProtKB-KW"/>
</dbReference>
<dbReference type="GO" id="GO:0070814">
    <property type="term" value="P:hydrogen sulfide biosynthetic process"/>
    <property type="evidence" value="ECO:0007669"/>
    <property type="project" value="UniProtKB-UniRule"/>
</dbReference>
<dbReference type="GO" id="GO:0000103">
    <property type="term" value="P:sulfate assimilation"/>
    <property type="evidence" value="ECO:0007669"/>
    <property type="project" value="UniProtKB-UniRule"/>
</dbReference>
<dbReference type="FunFam" id="3.30.413.10:FF:000003">
    <property type="entry name" value="Sulfite reductase [NADPH] hemoprotein beta-component"/>
    <property type="match status" value="1"/>
</dbReference>
<dbReference type="FunFam" id="3.30.413.10:FF:000004">
    <property type="entry name" value="Sulfite reductase [NADPH] hemoprotein beta-component"/>
    <property type="match status" value="1"/>
</dbReference>
<dbReference type="Gene3D" id="3.30.413.10">
    <property type="entry name" value="Sulfite Reductase Hemoprotein, domain 1"/>
    <property type="match status" value="2"/>
</dbReference>
<dbReference type="HAMAP" id="MF_01540">
    <property type="entry name" value="CysI"/>
    <property type="match status" value="1"/>
</dbReference>
<dbReference type="InterPro" id="IPR011786">
    <property type="entry name" value="CysI"/>
</dbReference>
<dbReference type="InterPro" id="IPR005117">
    <property type="entry name" value="NiRdtase/SiRdtase_haem-b_fer"/>
</dbReference>
<dbReference type="InterPro" id="IPR036136">
    <property type="entry name" value="Nit/Sulf_reduc_fer-like_dom_sf"/>
</dbReference>
<dbReference type="InterPro" id="IPR006067">
    <property type="entry name" value="NO2/SO3_Rdtase_4Fe4S_dom"/>
</dbReference>
<dbReference type="InterPro" id="IPR045169">
    <property type="entry name" value="NO2/SO3_Rdtase_4Fe4S_prot"/>
</dbReference>
<dbReference type="InterPro" id="IPR045854">
    <property type="entry name" value="NO2/SO3_Rdtase_4Fe4S_sf"/>
</dbReference>
<dbReference type="InterPro" id="IPR006066">
    <property type="entry name" value="NO2/SO3_Rdtase_FeS/sirohaem_BS"/>
</dbReference>
<dbReference type="NCBIfam" id="TIGR02041">
    <property type="entry name" value="CysI"/>
    <property type="match status" value="1"/>
</dbReference>
<dbReference type="NCBIfam" id="NF010029">
    <property type="entry name" value="PRK13504.1"/>
    <property type="match status" value="1"/>
</dbReference>
<dbReference type="PANTHER" id="PTHR11493:SF47">
    <property type="entry name" value="SULFITE REDUCTASE [NADPH] SUBUNIT BETA"/>
    <property type="match status" value="1"/>
</dbReference>
<dbReference type="PANTHER" id="PTHR11493">
    <property type="entry name" value="SULFITE REDUCTASE [NADPH] SUBUNIT BETA-RELATED"/>
    <property type="match status" value="1"/>
</dbReference>
<dbReference type="Pfam" id="PF01077">
    <property type="entry name" value="NIR_SIR"/>
    <property type="match status" value="1"/>
</dbReference>
<dbReference type="Pfam" id="PF03460">
    <property type="entry name" value="NIR_SIR_ferr"/>
    <property type="match status" value="2"/>
</dbReference>
<dbReference type="PRINTS" id="PR00397">
    <property type="entry name" value="SIROHAEM"/>
</dbReference>
<dbReference type="SUPFAM" id="SSF56014">
    <property type="entry name" value="Nitrite and sulphite reductase 4Fe-4S domain-like"/>
    <property type="match status" value="2"/>
</dbReference>
<dbReference type="SUPFAM" id="SSF55124">
    <property type="entry name" value="Nitrite/Sulfite reductase N-terminal domain-like"/>
    <property type="match status" value="2"/>
</dbReference>
<dbReference type="PROSITE" id="PS00365">
    <property type="entry name" value="NIR_SIR"/>
    <property type="match status" value="1"/>
</dbReference>
<evidence type="ECO:0000255" key="1">
    <source>
        <dbReference type="HAMAP-Rule" id="MF_01540"/>
    </source>
</evidence>